<protein>
    <recommendedName>
        <fullName evidence="1">Ribosomal RNA small subunit methyltransferase H</fullName>
        <ecNumber evidence="1">2.1.1.199</ecNumber>
    </recommendedName>
    <alternativeName>
        <fullName evidence="1">16S rRNA m(4)C1402 methyltransferase</fullName>
    </alternativeName>
    <alternativeName>
        <fullName evidence="1">rRNA (cytosine-N(4)-)-methyltransferase RsmH</fullName>
    </alternativeName>
</protein>
<evidence type="ECO:0000255" key="1">
    <source>
        <dbReference type="HAMAP-Rule" id="MF_01007"/>
    </source>
</evidence>
<reference key="1">
    <citation type="journal article" date="1998" name="Nature">
        <title>The genome sequence of Rickettsia prowazekii and the origin of mitochondria.</title>
        <authorList>
            <person name="Andersson S.G.E."/>
            <person name="Zomorodipour A."/>
            <person name="Andersson J.O."/>
            <person name="Sicheritz-Ponten T."/>
            <person name="Alsmark U.C.M."/>
            <person name="Podowski R.M."/>
            <person name="Naeslund A.K."/>
            <person name="Eriksson A.-S."/>
            <person name="Winkler H.H."/>
            <person name="Kurland C.G."/>
        </authorList>
    </citation>
    <scope>NUCLEOTIDE SEQUENCE [LARGE SCALE GENOMIC DNA]</scope>
    <source>
        <strain>Madrid E</strain>
    </source>
</reference>
<keyword id="KW-0963">Cytoplasm</keyword>
<keyword id="KW-0489">Methyltransferase</keyword>
<keyword id="KW-1185">Reference proteome</keyword>
<keyword id="KW-0698">rRNA processing</keyword>
<keyword id="KW-0949">S-adenosyl-L-methionine</keyword>
<keyword id="KW-0808">Transferase</keyword>
<gene>
    <name evidence="1" type="primary">rsmH</name>
    <name type="synonym">mraW</name>
    <name type="ordered locus">RP569</name>
</gene>
<proteinExistence type="inferred from homology"/>
<feature type="chain" id="PRO_0000108694" description="Ribosomal RNA small subunit methyltransferase H">
    <location>
        <begin position="1"/>
        <end position="306"/>
    </location>
</feature>
<feature type="binding site" evidence="1">
    <location>
        <begin position="33"/>
        <end position="35"/>
    </location>
    <ligand>
        <name>S-adenosyl-L-methionine</name>
        <dbReference type="ChEBI" id="CHEBI:59789"/>
    </ligand>
</feature>
<feature type="binding site" evidence="1">
    <location>
        <position position="51"/>
    </location>
    <ligand>
        <name>S-adenosyl-L-methionine</name>
        <dbReference type="ChEBI" id="CHEBI:59789"/>
    </ligand>
</feature>
<feature type="binding site" evidence="1">
    <location>
        <position position="78"/>
    </location>
    <ligand>
        <name>S-adenosyl-L-methionine</name>
        <dbReference type="ChEBI" id="CHEBI:59789"/>
    </ligand>
</feature>
<feature type="binding site" evidence="1">
    <location>
        <position position="96"/>
    </location>
    <ligand>
        <name>S-adenosyl-L-methionine</name>
        <dbReference type="ChEBI" id="CHEBI:59789"/>
    </ligand>
</feature>
<feature type="binding site" evidence="1">
    <location>
        <position position="103"/>
    </location>
    <ligand>
        <name>S-adenosyl-L-methionine</name>
        <dbReference type="ChEBI" id="CHEBI:59789"/>
    </ligand>
</feature>
<accession>Q9ZCY2</accession>
<dbReference type="EC" id="2.1.1.199" evidence="1"/>
<dbReference type="EMBL" id="AJ235272">
    <property type="protein sequence ID" value="CAA15017.1"/>
    <property type="molecule type" value="Genomic_DNA"/>
</dbReference>
<dbReference type="PIR" id="G71661">
    <property type="entry name" value="G71661"/>
</dbReference>
<dbReference type="RefSeq" id="NP_220941.1">
    <property type="nucleotide sequence ID" value="NC_000963.1"/>
</dbReference>
<dbReference type="RefSeq" id="WP_010886328.1">
    <property type="nucleotide sequence ID" value="NC_000963.1"/>
</dbReference>
<dbReference type="SMR" id="Q9ZCY2"/>
<dbReference type="STRING" id="272947.gene:17555649"/>
<dbReference type="EnsemblBacteria" id="CAA15017">
    <property type="protein sequence ID" value="CAA15017"/>
    <property type="gene ID" value="CAA15017"/>
</dbReference>
<dbReference type="KEGG" id="rpr:RP569"/>
<dbReference type="PATRIC" id="fig|272947.5.peg.585"/>
<dbReference type="eggNOG" id="COG0275">
    <property type="taxonomic scope" value="Bacteria"/>
</dbReference>
<dbReference type="HOGENOM" id="CLU_038422_1_1_5"/>
<dbReference type="OrthoDB" id="9806637at2"/>
<dbReference type="Proteomes" id="UP000002480">
    <property type="component" value="Chromosome"/>
</dbReference>
<dbReference type="GO" id="GO:0005737">
    <property type="term" value="C:cytoplasm"/>
    <property type="evidence" value="ECO:0007669"/>
    <property type="project" value="UniProtKB-SubCell"/>
</dbReference>
<dbReference type="GO" id="GO:0071424">
    <property type="term" value="F:rRNA (cytosine-N4-)-methyltransferase activity"/>
    <property type="evidence" value="ECO:0007669"/>
    <property type="project" value="UniProtKB-UniRule"/>
</dbReference>
<dbReference type="GO" id="GO:0070475">
    <property type="term" value="P:rRNA base methylation"/>
    <property type="evidence" value="ECO:0007669"/>
    <property type="project" value="UniProtKB-UniRule"/>
</dbReference>
<dbReference type="CDD" id="cd02440">
    <property type="entry name" value="AdoMet_MTases"/>
    <property type="match status" value="1"/>
</dbReference>
<dbReference type="FunFam" id="1.10.150.170:FF:000003">
    <property type="entry name" value="Ribosomal RNA small subunit methyltransferase H"/>
    <property type="match status" value="1"/>
</dbReference>
<dbReference type="Gene3D" id="1.10.150.170">
    <property type="entry name" value="Putative methyltransferase TM0872, insert domain"/>
    <property type="match status" value="1"/>
</dbReference>
<dbReference type="Gene3D" id="3.40.50.150">
    <property type="entry name" value="Vaccinia Virus protein VP39"/>
    <property type="match status" value="1"/>
</dbReference>
<dbReference type="HAMAP" id="MF_01007">
    <property type="entry name" value="16SrRNA_methyltr_H"/>
    <property type="match status" value="1"/>
</dbReference>
<dbReference type="InterPro" id="IPR002903">
    <property type="entry name" value="RsmH"/>
</dbReference>
<dbReference type="InterPro" id="IPR023397">
    <property type="entry name" value="SAM-dep_MeTrfase_MraW_recog"/>
</dbReference>
<dbReference type="InterPro" id="IPR029063">
    <property type="entry name" value="SAM-dependent_MTases_sf"/>
</dbReference>
<dbReference type="NCBIfam" id="TIGR00006">
    <property type="entry name" value="16S rRNA (cytosine(1402)-N(4))-methyltransferase RsmH"/>
    <property type="match status" value="1"/>
</dbReference>
<dbReference type="PANTHER" id="PTHR11265:SF0">
    <property type="entry name" value="12S RRNA N4-METHYLCYTIDINE METHYLTRANSFERASE"/>
    <property type="match status" value="1"/>
</dbReference>
<dbReference type="PANTHER" id="PTHR11265">
    <property type="entry name" value="S-ADENOSYL-METHYLTRANSFERASE MRAW"/>
    <property type="match status" value="1"/>
</dbReference>
<dbReference type="Pfam" id="PF01795">
    <property type="entry name" value="Methyltransf_5"/>
    <property type="match status" value="1"/>
</dbReference>
<dbReference type="PIRSF" id="PIRSF004486">
    <property type="entry name" value="MraW"/>
    <property type="match status" value="1"/>
</dbReference>
<dbReference type="SUPFAM" id="SSF81799">
    <property type="entry name" value="Putative methyltransferase TM0872, insert domain"/>
    <property type="match status" value="1"/>
</dbReference>
<dbReference type="SUPFAM" id="SSF53335">
    <property type="entry name" value="S-adenosyl-L-methionine-dependent methyltransferases"/>
    <property type="match status" value="1"/>
</dbReference>
<comment type="function">
    <text evidence="1">Specifically methylates the N4 position of cytidine in position 1402 (C1402) of 16S rRNA.</text>
</comment>
<comment type="catalytic activity">
    <reaction evidence="1">
        <text>cytidine(1402) in 16S rRNA + S-adenosyl-L-methionine = N(4)-methylcytidine(1402) in 16S rRNA + S-adenosyl-L-homocysteine + H(+)</text>
        <dbReference type="Rhea" id="RHEA:42928"/>
        <dbReference type="Rhea" id="RHEA-COMP:10286"/>
        <dbReference type="Rhea" id="RHEA-COMP:10287"/>
        <dbReference type="ChEBI" id="CHEBI:15378"/>
        <dbReference type="ChEBI" id="CHEBI:57856"/>
        <dbReference type="ChEBI" id="CHEBI:59789"/>
        <dbReference type="ChEBI" id="CHEBI:74506"/>
        <dbReference type="ChEBI" id="CHEBI:82748"/>
        <dbReference type="EC" id="2.1.1.199"/>
    </reaction>
</comment>
<comment type="subcellular location">
    <subcellularLocation>
        <location evidence="1">Cytoplasm</location>
    </subcellularLocation>
</comment>
<comment type="similarity">
    <text evidence="1">Belongs to the methyltransferase superfamily. RsmH family.</text>
</comment>
<organism>
    <name type="scientific">Rickettsia prowazekii (strain Madrid E)</name>
    <dbReference type="NCBI Taxonomy" id="272947"/>
    <lineage>
        <taxon>Bacteria</taxon>
        <taxon>Pseudomonadati</taxon>
        <taxon>Pseudomonadota</taxon>
        <taxon>Alphaproteobacteria</taxon>
        <taxon>Rickettsiales</taxon>
        <taxon>Rickettsiaceae</taxon>
        <taxon>Rickettsieae</taxon>
        <taxon>Rickettsia</taxon>
        <taxon>typhus group</taxon>
    </lineage>
</organism>
<name>RSMH_RICPR</name>
<sequence>MSQYHIPVMLSEVLAVLAPKGYESYLDCTFGAGGYSNAILNSCYCSVTSLDRDPNVIESVEKIKQDYGERFNFIKTNFADSFRKLKHKKFDGIVMDLGVSSMQLDIADRGFSFLYDGPLDMRMSVQGFSAEEFVNTADEEEIADVIYKYGNESLSRRIAKSIVEYRKTARIDSTRKLAEIVRYSIGFRKGKIDSATKTFQAIRIYINNELEELEQFLANVKNILKKDGRLVVVSFHSLEDRIVKNFFKENSEKQVARSKYAKDEIKIDPNKWLKIITPKVLTPSSQEIRLNVRARSAKLRAAKKII</sequence>